<gene>
    <name evidence="5" type="primary">DNAAF4</name>
    <name type="synonym">DYX1C1</name>
    <name type="synonym">EKN1</name>
</gene>
<reference key="1">
    <citation type="journal article" date="2003" name="Proc. Natl. Acad. Sci. U.S.A.">
        <title>A candidate gene for developmental dyslexia encodes a nuclear tetratricopeptide repeat domain protein dynamically regulated in brain.</title>
        <authorList>
            <person name="Taipale M."/>
            <person name="Kaminen N."/>
            <person name="Nopola-Hemmi J."/>
            <person name="Haltia T."/>
            <person name="Myllyluoma B."/>
            <person name="Lyytinen H."/>
            <person name="Muller K."/>
            <person name="Kaaranen M."/>
            <person name="Lindsberg P.J."/>
            <person name="Hannula-Jouppi K."/>
            <person name="Kere J."/>
        </authorList>
    </citation>
    <scope>NUCLEOTIDE SEQUENCE [GENOMIC DNA]</scope>
</reference>
<proteinExistence type="inferred from homology"/>
<dbReference type="EMBL" id="AY178600">
    <property type="protein sequence ID" value="AAO22535.1"/>
    <property type="molecule type" value="Genomic_DNA"/>
</dbReference>
<dbReference type="EMBL" id="AY178592">
    <property type="protein sequence ID" value="AAO22535.1"/>
    <property type="status" value="JOINED"/>
    <property type="molecule type" value="Genomic_DNA"/>
</dbReference>
<dbReference type="EMBL" id="AY178593">
    <property type="protein sequence ID" value="AAO22535.1"/>
    <property type="status" value="JOINED"/>
    <property type="molecule type" value="Genomic_DNA"/>
</dbReference>
<dbReference type="EMBL" id="AY178594">
    <property type="protein sequence ID" value="AAO22535.1"/>
    <property type="status" value="JOINED"/>
    <property type="molecule type" value="Genomic_DNA"/>
</dbReference>
<dbReference type="EMBL" id="AY178595">
    <property type="protein sequence ID" value="AAO22535.1"/>
    <property type="status" value="JOINED"/>
    <property type="molecule type" value="Genomic_DNA"/>
</dbReference>
<dbReference type="EMBL" id="AY178596">
    <property type="protein sequence ID" value="AAO22535.1"/>
    <property type="status" value="JOINED"/>
    <property type="molecule type" value="Genomic_DNA"/>
</dbReference>
<dbReference type="EMBL" id="AY178597">
    <property type="protein sequence ID" value="AAO22535.1"/>
    <property type="status" value="JOINED"/>
    <property type="molecule type" value="Genomic_DNA"/>
</dbReference>
<dbReference type="EMBL" id="AY178598">
    <property type="protein sequence ID" value="AAO22535.1"/>
    <property type="status" value="JOINED"/>
    <property type="molecule type" value="Genomic_DNA"/>
</dbReference>
<dbReference type="EMBL" id="AY178599">
    <property type="protein sequence ID" value="AAO22535.1"/>
    <property type="status" value="JOINED"/>
    <property type="molecule type" value="Genomic_DNA"/>
</dbReference>
<dbReference type="RefSeq" id="XP_003827906.1">
    <property type="nucleotide sequence ID" value="XM_003827858.2"/>
</dbReference>
<dbReference type="RefSeq" id="XP_034794682.1">
    <property type="nucleotide sequence ID" value="XM_034938791.4"/>
</dbReference>
<dbReference type="SMR" id="Q863A6"/>
<dbReference type="STRING" id="9597.ENSPPAP00000003301"/>
<dbReference type="Ensembl" id="ENSPPAT00000015198.1">
    <property type="protein sequence ID" value="ENSPPAP00000003301.1"/>
    <property type="gene ID" value="ENSPPAG00000013865.1"/>
</dbReference>
<dbReference type="GeneID" id="100995246"/>
<dbReference type="eggNOG" id="KOG1124">
    <property type="taxonomic scope" value="Eukaryota"/>
</dbReference>
<dbReference type="GeneTree" id="ENSGT00390000004930"/>
<dbReference type="OMA" id="ELAAWHF"/>
<dbReference type="Proteomes" id="UP000240080">
    <property type="component" value="Chromosome 15"/>
</dbReference>
<dbReference type="Bgee" id="ENSPPAG00000013865">
    <property type="expression patterns" value="Expressed in testis and 5 other cell types or tissues"/>
</dbReference>
<dbReference type="GO" id="GO:0005737">
    <property type="term" value="C:cytoplasm"/>
    <property type="evidence" value="ECO:0000250"/>
    <property type="project" value="UniProtKB"/>
</dbReference>
<dbReference type="GO" id="GO:0005829">
    <property type="term" value="C:cytosol"/>
    <property type="evidence" value="ECO:0007669"/>
    <property type="project" value="Ensembl"/>
</dbReference>
<dbReference type="GO" id="GO:0120293">
    <property type="term" value="C:dynein axonemal particle"/>
    <property type="evidence" value="ECO:0000250"/>
    <property type="project" value="UniProtKB"/>
</dbReference>
<dbReference type="GO" id="GO:0005576">
    <property type="term" value="C:extracellular region"/>
    <property type="evidence" value="ECO:0007669"/>
    <property type="project" value="GOC"/>
</dbReference>
<dbReference type="GO" id="GO:0043005">
    <property type="term" value="C:neuron projection"/>
    <property type="evidence" value="ECO:0007669"/>
    <property type="project" value="UniProtKB-SubCell"/>
</dbReference>
<dbReference type="GO" id="GO:0005634">
    <property type="term" value="C:nucleus"/>
    <property type="evidence" value="ECO:0000250"/>
    <property type="project" value="UniProtKB"/>
</dbReference>
<dbReference type="GO" id="GO:0005886">
    <property type="term" value="C:plasma membrane"/>
    <property type="evidence" value="ECO:0007669"/>
    <property type="project" value="Ensembl"/>
</dbReference>
<dbReference type="GO" id="GO:0030331">
    <property type="term" value="F:nuclear estrogen receptor binding"/>
    <property type="evidence" value="ECO:0000250"/>
    <property type="project" value="UniProtKB"/>
</dbReference>
<dbReference type="GO" id="GO:0003341">
    <property type="term" value="P:cilium movement"/>
    <property type="evidence" value="ECO:0000250"/>
    <property type="project" value="UniProtKB"/>
</dbReference>
<dbReference type="GO" id="GO:0007368">
    <property type="term" value="P:determination of left/right symmetry"/>
    <property type="evidence" value="ECO:0000250"/>
    <property type="project" value="UniProtKB"/>
</dbReference>
<dbReference type="GO" id="GO:0003351">
    <property type="term" value="P:epithelial cilium movement involved in extracellular fluid movement"/>
    <property type="evidence" value="ECO:0007669"/>
    <property type="project" value="Ensembl"/>
</dbReference>
<dbReference type="GO" id="GO:0051649">
    <property type="term" value="P:establishment of localization in cell"/>
    <property type="evidence" value="ECO:0007669"/>
    <property type="project" value="Ensembl"/>
</dbReference>
<dbReference type="GO" id="GO:0007507">
    <property type="term" value="P:heart development"/>
    <property type="evidence" value="ECO:0007669"/>
    <property type="project" value="Ensembl"/>
</dbReference>
<dbReference type="GO" id="GO:0036159">
    <property type="term" value="P:inner dynein arm assembly"/>
    <property type="evidence" value="ECO:0000250"/>
    <property type="project" value="UniProtKB"/>
</dbReference>
<dbReference type="GO" id="GO:0007611">
    <property type="term" value="P:learning or memory"/>
    <property type="evidence" value="ECO:0007669"/>
    <property type="project" value="Ensembl"/>
</dbReference>
<dbReference type="GO" id="GO:0001764">
    <property type="term" value="P:neuron migration"/>
    <property type="evidence" value="ECO:0000250"/>
    <property type="project" value="UniProtKB"/>
</dbReference>
<dbReference type="GO" id="GO:0036158">
    <property type="term" value="P:outer dynein arm assembly"/>
    <property type="evidence" value="ECO:0000250"/>
    <property type="project" value="UniProtKB"/>
</dbReference>
<dbReference type="GO" id="GO:0033146">
    <property type="term" value="P:regulation of intracellular estrogen receptor signaling pathway"/>
    <property type="evidence" value="ECO:0000250"/>
    <property type="project" value="UniProtKB"/>
</dbReference>
<dbReference type="GO" id="GO:0061136">
    <property type="term" value="P:regulation of proteasomal protein catabolic process"/>
    <property type="evidence" value="ECO:0000250"/>
    <property type="project" value="UniProtKB"/>
</dbReference>
<dbReference type="CDD" id="cd06469">
    <property type="entry name" value="p23_DYX1C1_like"/>
    <property type="match status" value="1"/>
</dbReference>
<dbReference type="FunFam" id="1.25.40.10:FF:000176">
    <property type="entry name" value="dynein assembly factor 4, axonemal isoform X1"/>
    <property type="match status" value="1"/>
</dbReference>
<dbReference type="FunFam" id="2.60.40.790:FF:000015">
    <property type="entry name" value="dynein assembly factor 4, axonemal isoform X1"/>
    <property type="match status" value="1"/>
</dbReference>
<dbReference type="Gene3D" id="2.60.40.790">
    <property type="match status" value="1"/>
</dbReference>
<dbReference type="Gene3D" id="1.25.40.10">
    <property type="entry name" value="Tetratricopeptide repeat domain"/>
    <property type="match status" value="1"/>
</dbReference>
<dbReference type="InterPro" id="IPR007052">
    <property type="entry name" value="CS_dom"/>
</dbReference>
<dbReference type="InterPro" id="IPR037894">
    <property type="entry name" value="CS_DYX1C1"/>
</dbReference>
<dbReference type="InterPro" id="IPR052004">
    <property type="entry name" value="Dynein_assembly_factor_4"/>
</dbReference>
<dbReference type="InterPro" id="IPR008978">
    <property type="entry name" value="HSP20-like_chaperone"/>
</dbReference>
<dbReference type="InterPro" id="IPR011990">
    <property type="entry name" value="TPR-like_helical_dom_sf"/>
</dbReference>
<dbReference type="InterPro" id="IPR019734">
    <property type="entry name" value="TPR_rpt"/>
</dbReference>
<dbReference type="PANTHER" id="PTHR46492">
    <property type="entry name" value="DYNEIN ASSEMBLY FACTOR 4, AXONEMAL"/>
    <property type="match status" value="1"/>
</dbReference>
<dbReference type="PANTHER" id="PTHR46492:SF1">
    <property type="entry name" value="DYNEIN AXONEMAL ASSEMBLY FACTOR 4"/>
    <property type="match status" value="1"/>
</dbReference>
<dbReference type="Pfam" id="PF04969">
    <property type="entry name" value="CS"/>
    <property type="match status" value="1"/>
</dbReference>
<dbReference type="SMART" id="SM00028">
    <property type="entry name" value="TPR"/>
    <property type="match status" value="3"/>
</dbReference>
<dbReference type="SUPFAM" id="SSF49764">
    <property type="entry name" value="HSP20-like chaperones"/>
    <property type="match status" value="1"/>
</dbReference>
<dbReference type="SUPFAM" id="SSF48452">
    <property type="entry name" value="TPR-like"/>
    <property type="match status" value="1"/>
</dbReference>
<dbReference type="PROSITE" id="PS51203">
    <property type="entry name" value="CS"/>
    <property type="match status" value="1"/>
</dbReference>
<dbReference type="PROSITE" id="PS50005">
    <property type="entry name" value="TPR"/>
    <property type="match status" value="3"/>
</dbReference>
<dbReference type="PROSITE" id="PS50293">
    <property type="entry name" value="TPR_REGION"/>
    <property type="match status" value="1"/>
</dbReference>
<accession>Q863A6</accession>
<protein>
    <recommendedName>
        <fullName evidence="5">Dynein axonemal assembly factor 4</fullName>
    </recommendedName>
    <alternativeName>
        <fullName evidence="5">Dyslexia susceptibility 1 candidate gene 1 protein homolog</fullName>
    </alternativeName>
</protein>
<keyword id="KW-0966">Cell projection</keyword>
<keyword id="KW-0963">Cytoplasm</keyword>
<keyword id="KW-0524">Neurogenesis</keyword>
<keyword id="KW-0539">Nucleus</keyword>
<keyword id="KW-1185">Reference proteome</keyword>
<keyword id="KW-0677">Repeat</keyword>
<keyword id="KW-0802">TPR repeat</keyword>
<name>DAAF4_PANPA</name>
<feature type="chain" id="PRO_0000106286" description="Dynein axonemal assembly factor 4">
    <location>
        <begin position="1"/>
        <end position="420"/>
    </location>
</feature>
<feature type="domain" description="CS" evidence="6">
    <location>
        <begin position="3"/>
        <end position="87"/>
    </location>
</feature>
<feature type="repeat" description="TPR 1">
    <location>
        <begin position="290"/>
        <end position="323"/>
    </location>
</feature>
<feature type="repeat" description="TPR 2">
    <location>
        <begin position="324"/>
        <end position="357"/>
    </location>
</feature>
<feature type="repeat" description="TPR 3">
    <location>
        <begin position="366"/>
        <end position="399"/>
    </location>
</feature>
<feature type="region of interest" description="Mediates interaction with ESR1 and STUB1" evidence="1">
    <location>
        <begin position="7"/>
        <end position="103"/>
    </location>
</feature>
<comment type="function">
    <text evidence="4 5">Involved in neuronal migration during development of the cerebral neocortex. May regulate the stability and proteasomal degradation of the estrogen receptors that play an important role in neuronal differentiation, survival and plasticity. Axonemal dynein assembly factor required for ciliary motility (By similarity).</text>
</comment>
<comment type="subunit">
    <text evidence="4 5">Interacts with ZMYND10 (By similarity). Interacts with STUB1 (By similarity). Interacts with ESR1 and ESR2. Interacts with DNAAF2 (By similarity). Interacts with CCT3, CCT4, CCT5 and CCT8 (By similarity). Interacts with DNAAF6/PIH1D3 (By similarity).</text>
</comment>
<comment type="subcellular location">
    <subcellularLocation>
        <location evidence="5">Nucleus</location>
    </subcellularLocation>
    <subcellularLocation>
        <location evidence="2">Cytoplasm</location>
    </subcellularLocation>
    <subcellularLocation>
        <location evidence="2">Cell projection</location>
        <location evidence="2">Neuron projection</location>
    </subcellularLocation>
    <subcellularLocation>
        <location evidence="3">Dynein axonemal particle</location>
    </subcellularLocation>
</comment>
<evidence type="ECO:0000250" key="1"/>
<evidence type="ECO:0000250" key="2">
    <source>
        <dbReference type="UniProtKB" id="Q5VJS5"/>
    </source>
</evidence>
<evidence type="ECO:0000250" key="3">
    <source>
        <dbReference type="UniProtKB" id="Q6AZN0"/>
    </source>
</evidence>
<evidence type="ECO:0000250" key="4">
    <source>
        <dbReference type="UniProtKB" id="Q8R368"/>
    </source>
</evidence>
<evidence type="ECO:0000250" key="5">
    <source>
        <dbReference type="UniProtKB" id="Q8WXU2"/>
    </source>
</evidence>
<evidence type="ECO:0000255" key="6">
    <source>
        <dbReference type="PROSITE-ProRule" id="PRU00547"/>
    </source>
</evidence>
<organism>
    <name type="scientific">Pan paniscus</name>
    <name type="common">Pygmy chimpanzee</name>
    <name type="synonym">Bonobo</name>
    <dbReference type="NCBI Taxonomy" id="9597"/>
    <lineage>
        <taxon>Eukaryota</taxon>
        <taxon>Metazoa</taxon>
        <taxon>Chordata</taxon>
        <taxon>Craniata</taxon>
        <taxon>Vertebrata</taxon>
        <taxon>Euteleostomi</taxon>
        <taxon>Mammalia</taxon>
        <taxon>Eutheria</taxon>
        <taxon>Euarchontoglires</taxon>
        <taxon>Primates</taxon>
        <taxon>Haplorrhini</taxon>
        <taxon>Catarrhini</taxon>
        <taxon>Hominidae</taxon>
        <taxon>Pan</taxon>
    </lineage>
</organism>
<sequence>MPLQVSDYSWQQTKTAVFLSLPLKGVCVRDTDVFCTENYLKVNFPPFLFEAFLYAPIDDESSKAKIGNDTIVFTLYKKEAAMWETLSVTGVDKEMMQRIREKSILQAQERAKEATEAKAAAKREDQKYALSVMMKIEEEERKKIEDMKENERIKATKELEAWKEYQRKAEEQKKIQREEKLCQKEKQIKEERKKIKYKSLTRNLASRNLAPKGRNSENIFTEKLKEDSIPAPRSVGSIKINFTPRVFPTALRESQVAEEEEWLHKQAEARRAMNTDIAELCDLKEEEKNPEWLKDKGNKLFATENYLAAINAYNLAIRLNNKMPLLYLNRAACHLKLKNLHKAIEDSSKALELLMPPVTDNANARMKAHVRRGTAFCQLELYVEGLQDYEAALKIDPSNKIVQIDAEKIRNVIQGTELKS</sequence>